<keyword id="KW-0963">Cytoplasm</keyword>
<keyword id="KW-0489">Methyltransferase</keyword>
<keyword id="KW-0949">S-adenosyl-L-methionine</keyword>
<keyword id="KW-0808">Transferase</keyword>
<evidence type="ECO:0000255" key="1">
    <source>
        <dbReference type="HAMAP-Rule" id="MF_00560"/>
    </source>
</evidence>
<proteinExistence type="inferred from homology"/>
<gene>
    <name evidence="1" type="primary">tam</name>
    <name type="ordered locus">Mmcs_0386</name>
</gene>
<protein>
    <recommendedName>
        <fullName evidence="1">Trans-aconitate 2-methyltransferase</fullName>
        <ecNumber evidence="1">2.1.1.144</ecNumber>
    </recommendedName>
</protein>
<name>TAM_MYCSS</name>
<organism>
    <name type="scientific">Mycobacterium sp. (strain MCS)</name>
    <dbReference type="NCBI Taxonomy" id="164756"/>
    <lineage>
        <taxon>Bacteria</taxon>
        <taxon>Bacillati</taxon>
        <taxon>Actinomycetota</taxon>
        <taxon>Actinomycetes</taxon>
        <taxon>Mycobacteriales</taxon>
        <taxon>Mycobacteriaceae</taxon>
        <taxon>Mycobacterium</taxon>
    </lineage>
</organism>
<dbReference type="EC" id="2.1.1.144" evidence="1"/>
<dbReference type="EMBL" id="CP000384">
    <property type="protein sequence ID" value="ABG06507.1"/>
    <property type="molecule type" value="Genomic_DNA"/>
</dbReference>
<dbReference type="SMR" id="Q1BF27"/>
<dbReference type="KEGG" id="mmc:Mmcs_0386"/>
<dbReference type="HOGENOM" id="CLU_037990_5_2_11"/>
<dbReference type="BioCyc" id="MSP164756:G1G6O-394-MONOMER"/>
<dbReference type="GO" id="GO:0005737">
    <property type="term" value="C:cytoplasm"/>
    <property type="evidence" value="ECO:0007669"/>
    <property type="project" value="UniProtKB-SubCell"/>
</dbReference>
<dbReference type="GO" id="GO:0030798">
    <property type="term" value="F:trans-aconitate 2-methyltransferase activity"/>
    <property type="evidence" value="ECO:0007669"/>
    <property type="project" value="UniProtKB-UniRule"/>
</dbReference>
<dbReference type="GO" id="GO:0032259">
    <property type="term" value="P:methylation"/>
    <property type="evidence" value="ECO:0007669"/>
    <property type="project" value="UniProtKB-KW"/>
</dbReference>
<dbReference type="CDD" id="cd02440">
    <property type="entry name" value="AdoMet_MTases"/>
    <property type="match status" value="1"/>
</dbReference>
<dbReference type="Gene3D" id="1.10.150.290">
    <property type="entry name" value="S-adenosyl-L-methionine-dependent methyltransferases"/>
    <property type="match status" value="1"/>
</dbReference>
<dbReference type="Gene3D" id="3.40.50.150">
    <property type="entry name" value="Vaccinia Virus protein VP39"/>
    <property type="match status" value="1"/>
</dbReference>
<dbReference type="HAMAP" id="MF_00560">
    <property type="entry name" value="Tran_acon_Me_trans"/>
    <property type="match status" value="1"/>
</dbReference>
<dbReference type="InterPro" id="IPR029063">
    <property type="entry name" value="SAM-dependent_MTases_sf"/>
</dbReference>
<dbReference type="InterPro" id="IPR023506">
    <property type="entry name" value="Trans-aconitate_MeTrfase"/>
</dbReference>
<dbReference type="InterPro" id="IPR023149">
    <property type="entry name" value="Trans_acon_MeTrfase_C"/>
</dbReference>
<dbReference type="NCBIfam" id="NF010703">
    <property type="entry name" value="PRK14103.1"/>
    <property type="match status" value="1"/>
</dbReference>
<dbReference type="PANTHER" id="PTHR43861:SF1">
    <property type="entry name" value="TRANS-ACONITATE 2-METHYLTRANSFERASE"/>
    <property type="match status" value="1"/>
</dbReference>
<dbReference type="PANTHER" id="PTHR43861">
    <property type="entry name" value="TRANS-ACONITATE 2-METHYLTRANSFERASE-RELATED"/>
    <property type="match status" value="1"/>
</dbReference>
<dbReference type="Pfam" id="PF13489">
    <property type="entry name" value="Methyltransf_23"/>
    <property type="match status" value="1"/>
</dbReference>
<dbReference type="SUPFAM" id="SSF53335">
    <property type="entry name" value="S-adenosyl-L-methionine-dependent methyltransferases"/>
    <property type="match status" value="1"/>
</dbReference>
<accession>Q1BF27</accession>
<reference key="1">
    <citation type="submission" date="2006-06" db="EMBL/GenBank/DDBJ databases">
        <title>Complete sequence of chromosome of Mycobacterium sp. MCS.</title>
        <authorList>
            <consortium name="US DOE Joint Genome Institute"/>
            <person name="Copeland A."/>
            <person name="Lucas S."/>
            <person name="Lapidus A."/>
            <person name="Barry K."/>
            <person name="Detter J.C."/>
            <person name="Glavina del Rio T."/>
            <person name="Hammon N."/>
            <person name="Israni S."/>
            <person name="Dalin E."/>
            <person name="Tice H."/>
            <person name="Pitluck S."/>
            <person name="Martinez M."/>
            <person name="Schmutz J."/>
            <person name="Larimer F."/>
            <person name="Land M."/>
            <person name="Hauser L."/>
            <person name="Kyrpides N."/>
            <person name="Kim E."/>
            <person name="Miller C.D."/>
            <person name="Hughes J.E."/>
            <person name="Anderson A.J."/>
            <person name="Sims R.C."/>
            <person name="Richardson P."/>
        </authorList>
    </citation>
    <scope>NUCLEOTIDE SEQUENCE [LARGE SCALE GENOMIC DNA]</scope>
    <source>
        <strain>MCS</strain>
    </source>
</reference>
<sequence>MWNPEAYLSFADHRGRPFFDLLARVGADAPRRVVDLGCGPGNLTVVLRHRWPEAVVEAWDNSPEMVAAARERGVQANLGDVRGWSPQPDTDVVLSNATLQWVPEHPELLTRWAGALAAGSWLAMQVPGNFDAPSHQAVRRLADREPWAPLLHDIPFRVGKVVETPADYAALLTDAGCSVDAWETTYIHELTDAHPVLEWITGTALRPVRSRLTDEQWDRFRAELIPLLDEAYPVRADGRTFFPFRRVFVVARTG</sequence>
<comment type="function">
    <text evidence="1">Catalyzes the S-adenosylmethionine monomethyl esterification of trans-aconitate.</text>
</comment>
<comment type="catalytic activity">
    <reaction evidence="1">
        <text>trans-aconitate + S-adenosyl-L-methionine = (E)-3-(methoxycarbonyl)pent-2-enedioate + S-adenosyl-L-homocysteine</text>
        <dbReference type="Rhea" id="RHEA:14969"/>
        <dbReference type="ChEBI" id="CHEBI:15708"/>
        <dbReference type="ChEBI" id="CHEBI:57470"/>
        <dbReference type="ChEBI" id="CHEBI:57856"/>
        <dbReference type="ChEBI" id="CHEBI:59789"/>
        <dbReference type="EC" id="2.1.1.144"/>
    </reaction>
</comment>
<comment type="subcellular location">
    <subcellularLocation>
        <location evidence="1">Cytoplasm</location>
    </subcellularLocation>
</comment>
<comment type="similarity">
    <text evidence="1">Belongs to the methyltransferase superfamily. Tam family.</text>
</comment>
<feature type="chain" id="PRO_1000056564" description="Trans-aconitate 2-methyltransferase">
    <location>
        <begin position="1"/>
        <end position="254"/>
    </location>
</feature>